<gene>
    <name type="ordered locus">Rv0146</name>
</gene>
<sequence>MRTHDDTWDIKTSVGATAVMVAAARAVETDRPDPLIRDPYARLLVTNAGAGAIWEAMLDPTLVAKAAAIDAETAAIVAYLRSYQAVRTNFFDTYFASAVAAGIRQVVILASGLDSRAYRLDWPAGTIVYEIDQPKVLSYKSTTLAENGVTPSAGRREVPADLRQDWPAALRDAGFDPTARTAWLAEGLLMYLPAEAQDRLFTQVGAVSVAGSRIAAETAPVHGEERRAEMRARFKKVADVLGIEQTIDVQELVYHDQDRASVADWLTDHGWRARSQRAPDEMRRVGRWVEGVPMADDPTAFAEFVTAERL</sequence>
<organism>
    <name type="scientific">Mycobacterium tuberculosis (strain ATCC 25618 / H37Rv)</name>
    <dbReference type="NCBI Taxonomy" id="83332"/>
    <lineage>
        <taxon>Bacteria</taxon>
        <taxon>Bacillati</taxon>
        <taxon>Actinomycetota</taxon>
        <taxon>Actinomycetes</taxon>
        <taxon>Mycobacteriales</taxon>
        <taxon>Mycobacteriaceae</taxon>
        <taxon>Mycobacterium</taxon>
        <taxon>Mycobacterium tuberculosis complex</taxon>
    </lineage>
</organism>
<accession>P9WFJ3</accession>
<accession>L0T5V3</accession>
<accession>P96823</accession>
<accession>Q7DAE0</accession>
<protein>
    <recommendedName>
        <fullName>Putative S-adenosyl-L-methionine-dependent methyltransferase Rv0146</fullName>
        <ecNumber>2.1.1.-</ecNumber>
    </recommendedName>
</protein>
<proteinExistence type="evidence at protein level"/>
<keyword id="KW-0489">Methyltransferase</keyword>
<keyword id="KW-1185">Reference proteome</keyword>
<keyword id="KW-0949">S-adenosyl-L-methionine</keyword>
<keyword id="KW-0808">Transferase</keyword>
<evidence type="ECO:0000250" key="1"/>
<evidence type="ECO:0000305" key="2"/>
<dbReference type="EC" id="2.1.1.-"/>
<dbReference type="EMBL" id="AL123456">
    <property type="protein sequence ID" value="CCP42871.1"/>
    <property type="molecule type" value="Genomic_DNA"/>
</dbReference>
<dbReference type="PIR" id="E70617">
    <property type="entry name" value="E70617"/>
</dbReference>
<dbReference type="RefSeq" id="NP_214660.1">
    <property type="nucleotide sequence ID" value="NC_000962.3"/>
</dbReference>
<dbReference type="RefSeq" id="WP_003900814.1">
    <property type="nucleotide sequence ID" value="NZ_NVQJ01000001.1"/>
</dbReference>
<dbReference type="SMR" id="P9WFJ3"/>
<dbReference type="FunCoup" id="P9WFJ3">
    <property type="interactions" value="1"/>
</dbReference>
<dbReference type="STRING" id="83332.Rv0146"/>
<dbReference type="PaxDb" id="83332-Rv0146"/>
<dbReference type="DNASU" id="886849"/>
<dbReference type="GeneID" id="886849"/>
<dbReference type="KEGG" id="mtu:Rv0146"/>
<dbReference type="KEGG" id="mtv:RVBD_0146"/>
<dbReference type="PATRIC" id="fig|83332.111.peg.168"/>
<dbReference type="TubercuList" id="Rv0146"/>
<dbReference type="eggNOG" id="COG3315">
    <property type="taxonomic scope" value="Bacteria"/>
</dbReference>
<dbReference type="InParanoid" id="P9WFJ3"/>
<dbReference type="OrthoDB" id="9806164at2"/>
<dbReference type="PhylomeDB" id="P9WFJ3"/>
<dbReference type="Proteomes" id="UP000001584">
    <property type="component" value="Chromosome"/>
</dbReference>
<dbReference type="GO" id="GO:0005829">
    <property type="term" value="C:cytosol"/>
    <property type="evidence" value="ECO:0007005"/>
    <property type="project" value="MTBBASE"/>
</dbReference>
<dbReference type="GO" id="GO:0005886">
    <property type="term" value="C:plasma membrane"/>
    <property type="evidence" value="ECO:0007005"/>
    <property type="project" value="MTBBASE"/>
</dbReference>
<dbReference type="GO" id="GO:0008168">
    <property type="term" value="F:methyltransferase activity"/>
    <property type="evidence" value="ECO:0007669"/>
    <property type="project" value="UniProtKB-KW"/>
</dbReference>
<dbReference type="GO" id="GO:0032259">
    <property type="term" value="P:methylation"/>
    <property type="evidence" value="ECO:0007669"/>
    <property type="project" value="UniProtKB-KW"/>
</dbReference>
<dbReference type="GO" id="GO:0052167">
    <property type="term" value="P:symbiont-mediated perturbation of host innate immune response"/>
    <property type="evidence" value="ECO:0000314"/>
    <property type="project" value="MTBBASE"/>
</dbReference>
<dbReference type="FunFam" id="3.40.50.150:FF:000152">
    <property type="entry name" value="S-adenosyl-L-methionine-dependent methyltransferase"/>
    <property type="match status" value="1"/>
</dbReference>
<dbReference type="Gene3D" id="3.40.50.150">
    <property type="entry name" value="Vaccinia Virus protein VP39"/>
    <property type="match status" value="1"/>
</dbReference>
<dbReference type="InterPro" id="IPR007213">
    <property type="entry name" value="Ppm1/Ppm2/Tcmp"/>
</dbReference>
<dbReference type="InterPro" id="IPR029063">
    <property type="entry name" value="SAM-dependent_MTases_sf"/>
</dbReference>
<dbReference type="InterPro" id="IPR011610">
    <property type="entry name" value="SAM_mthyl_Trfase_ML2640-like"/>
</dbReference>
<dbReference type="NCBIfam" id="TIGR00027">
    <property type="entry name" value="mthyl_TIGR00027"/>
    <property type="match status" value="1"/>
</dbReference>
<dbReference type="PANTHER" id="PTHR43619">
    <property type="entry name" value="S-ADENOSYL-L-METHIONINE-DEPENDENT METHYLTRANSFERASE YKTD-RELATED"/>
    <property type="match status" value="1"/>
</dbReference>
<dbReference type="PANTHER" id="PTHR43619:SF2">
    <property type="entry name" value="S-ADENOSYL-L-METHIONINE-DEPENDENT METHYLTRANSFERASES SUPERFAMILY PROTEIN"/>
    <property type="match status" value="1"/>
</dbReference>
<dbReference type="Pfam" id="PF04072">
    <property type="entry name" value="LCM"/>
    <property type="match status" value="1"/>
</dbReference>
<dbReference type="SUPFAM" id="SSF53335">
    <property type="entry name" value="S-adenosyl-L-methionine-dependent methyltransferases"/>
    <property type="match status" value="1"/>
</dbReference>
<reference key="1">
    <citation type="journal article" date="1998" name="Nature">
        <title>Deciphering the biology of Mycobacterium tuberculosis from the complete genome sequence.</title>
        <authorList>
            <person name="Cole S.T."/>
            <person name="Brosch R."/>
            <person name="Parkhill J."/>
            <person name="Garnier T."/>
            <person name="Churcher C.M."/>
            <person name="Harris D.E."/>
            <person name="Gordon S.V."/>
            <person name="Eiglmeier K."/>
            <person name="Gas S."/>
            <person name="Barry C.E. III"/>
            <person name="Tekaia F."/>
            <person name="Badcock K."/>
            <person name="Basham D."/>
            <person name="Brown D."/>
            <person name="Chillingworth T."/>
            <person name="Connor R."/>
            <person name="Davies R.M."/>
            <person name="Devlin K."/>
            <person name="Feltwell T."/>
            <person name="Gentles S."/>
            <person name="Hamlin N."/>
            <person name="Holroyd S."/>
            <person name="Hornsby T."/>
            <person name="Jagels K."/>
            <person name="Krogh A."/>
            <person name="McLean J."/>
            <person name="Moule S."/>
            <person name="Murphy L.D."/>
            <person name="Oliver S."/>
            <person name="Osborne J."/>
            <person name="Quail M.A."/>
            <person name="Rajandream M.A."/>
            <person name="Rogers J."/>
            <person name="Rutter S."/>
            <person name="Seeger K."/>
            <person name="Skelton S."/>
            <person name="Squares S."/>
            <person name="Squares R."/>
            <person name="Sulston J.E."/>
            <person name="Taylor K."/>
            <person name="Whitehead S."/>
            <person name="Barrell B.G."/>
        </authorList>
    </citation>
    <scope>NUCLEOTIDE SEQUENCE [LARGE SCALE GENOMIC DNA]</scope>
    <source>
        <strain>ATCC 25618 / H37Rv</strain>
    </source>
</reference>
<reference key="2">
    <citation type="journal article" date="2011" name="Mol. Cell. Proteomics">
        <title>Proteogenomic analysis of Mycobacterium tuberculosis by high resolution mass spectrometry.</title>
        <authorList>
            <person name="Kelkar D.S."/>
            <person name="Kumar D."/>
            <person name="Kumar P."/>
            <person name="Balakrishnan L."/>
            <person name="Muthusamy B."/>
            <person name="Yadav A.K."/>
            <person name="Shrivastava P."/>
            <person name="Marimuthu A."/>
            <person name="Anand S."/>
            <person name="Sundaram H."/>
            <person name="Kingsbury R."/>
            <person name="Harsha H.C."/>
            <person name="Nair B."/>
            <person name="Prasad T.S."/>
            <person name="Chauhan D.S."/>
            <person name="Katoch K."/>
            <person name="Katoch V.M."/>
            <person name="Kumar P."/>
            <person name="Chaerkady R."/>
            <person name="Ramachandran S."/>
            <person name="Dash D."/>
            <person name="Pandey A."/>
        </authorList>
    </citation>
    <scope>IDENTIFICATION BY MASS SPECTROMETRY [LARGE SCALE ANALYSIS]</scope>
    <source>
        <strain>ATCC 25618 / H37Rv</strain>
    </source>
</reference>
<feature type="chain" id="PRO_0000361236" description="Putative S-adenosyl-L-methionine-dependent methyltransferase Rv0146">
    <location>
        <begin position="1"/>
        <end position="310"/>
    </location>
</feature>
<feature type="binding site" evidence="1">
    <location>
        <position position="132"/>
    </location>
    <ligand>
        <name>S-adenosyl-L-methionine</name>
        <dbReference type="ChEBI" id="CHEBI:59789"/>
    </ligand>
</feature>
<feature type="binding site" evidence="1">
    <location>
        <begin position="161"/>
        <end position="162"/>
    </location>
    <ligand>
        <name>S-adenosyl-L-methionine</name>
        <dbReference type="ChEBI" id="CHEBI:59789"/>
    </ligand>
</feature>
<name>Y146_MYCTU</name>
<comment type="function">
    <text evidence="1">Exhibits S-adenosyl-L-methionine-dependent methyltransferase activity.</text>
</comment>
<comment type="similarity">
    <text evidence="2">Belongs to the UPF0677 family.</text>
</comment>